<reference key="1">
    <citation type="submission" date="2006-05" db="EMBL/GenBank/DDBJ databases">
        <authorList>
            <consortium name="Genoscope"/>
        </authorList>
    </citation>
    <scope>NUCLEOTIDE SEQUENCE [LARGE SCALE GENOMIC DNA]</scope>
    <source>
        <strain>RCC307</strain>
    </source>
</reference>
<feature type="chain" id="PRO_1000007640" description="Large ribosomal subunit protein uL29">
    <location>
        <begin position="1"/>
        <end position="71"/>
    </location>
</feature>
<comment type="similarity">
    <text evidence="1">Belongs to the universal ribosomal protein uL29 family.</text>
</comment>
<name>RL29_SYNR3</name>
<protein>
    <recommendedName>
        <fullName evidence="1">Large ribosomal subunit protein uL29</fullName>
    </recommendedName>
    <alternativeName>
        <fullName evidence="2">50S ribosomal protein L29</fullName>
    </alternativeName>
</protein>
<proteinExistence type="inferred from homology"/>
<sequence>MALPDIAETRKLSDTEINEQISGTRRELFDLRFQQATSRLENPHRFRHARVKLAQLLTVQQERERSAAPAN</sequence>
<gene>
    <name evidence="1" type="primary">rpmC</name>
    <name evidence="1" type="synonym">rpl29</name>
    <name type="ordered locus">SynRCC307_2124</name>
</gene>
<accession>A5GVW8</accession>
<dbReference type="EMBL" id="CT978603">
    <property type="protein sequence ID" value="CAK29027.1"/>
    <property type="molecule type" value="Genomic_DNA"/>
</dbReference>
<dbReference type="SMR" id="A5GVW8"/>
<dbReference type="STRING" id="316278.SynRCC307_2124"/>
<dbReference type="KEGG" id="syr:SynRCC307_2124"/>
<dbReference type="eggNOG" id="COG0255">
    <property type="taxonomic scope" value="Bacteria"/>
</dbReference>
<dbReference type="HOGENOM" id="CLU_158491_0_1_3"/>
<dbReference type="OrthoDB" id="9815192at2"/>
<dbReference type="Proteomes" id="UP000001115">
    <property type="component" value="Chromosome"/>
</dbReference>
<dbReference type="GO" id="GO:0022625">
    <property type="term" value="C:cytosolic large ribosomal subunit"/>
    <property type="evidence" value="ECO:0007669"/>
    <property type="project" value="TreeGrafter"/>
</dbReference>
<dbReference type="GO" id="GO:0003735">
    <property type="term" value="F:structural constituent of ribosome"/>
    <property type="evidence" value="ECO:0007669"/>
    <property type="project" value="InterPro"/>
</dbReference>
<dbReference type="GO" id="GO:0006412">
    <property type="term" value="P:translation"/>
    <property type="evidence" value="ECO:0007669"/>
    <property type="project" value="UniProtKB-UniRule"/>
</dbReference>
<dbReference type="CDD" id="cd00427">
    <property type="entry name" value="Ribosomal_L29_HIP"/>
    <property type="match status" value="1"/>
</dbReference>
<dbReference type="Gene3D" id="1.10.287.310">
    <property type="match status" value="1"/>
</dbReference>
<dbReference type="HAMAP" id="MF_00374">
    <property type="entry name" value="Ribosomal_uL29"/>
    <property type="match status" value="1"/>
</dbReference>
<dbReference type="InterPro" id="IPR050063">
    <property type="entry name" value="Ribosomal_protein_uL29"/>
</dbReference>
<dbReference type="InterPro" id="IPR001854">
    <property type="entry name" value="Ribosomal_uL29"/>
</dbReference>
<dbReference type="InterPro" id="IPR036049">
    <property type="entry name" value="Ribosomal_uL29_sf"/>
</dbReference>
<dbReference type="NCBIfam" id="TIGR00012">
    <property type="entry name" value="L29"/>
    <property type="match status" value="1"/>
</dbReference>
<dbReference type="PANTHER" id="PTHR10916">
    <property type="entry name" value="60S RIBOSOMAL PROTEIN L35/50S RIBOSOMAL PROTEIN L29"/>
    <property type="match status" value="1"/>
</dbReference>
<dbReference type="PANTHER" id="PTHR10916:SF0">
    <property type="entry name" value="LARGE RIBOSOMAL SUBUNIT PROTEIN UL29C"/>
    <property type="match status" value="1"/>
</dbReference>
<dbReference type="Pfam" id="PF00831">
    <property type="entry name" value="Ribosomal_L29"/>
    <property type="match status" value="1"/>
</dbReference>
<dbReference type="SUPFAM" id="SSF46561">
    <property type="entry name" value="Ribosomal protein L29 (L29p)"/>
    <property type="match status" value="1"/>
</dbReference>
<organism>
    <name type="scientific">Synechococcus sp. (strain RCC307)</name>
    <dbReference type="NCBI Taxonomy" id="316278"/>
    <lineage>
        <taxon>Bacteria</taxon>
        <taxon>Bacillati</taxon>
        <taxon>Cyanobacteriota</taxon>
        <taxon>Cyanophyceae</taxon>
        <taxon>Synechococcales</taxon>
        <taxon>Synechococcaceae</taxon>
        <taxon>Synechococcus</taxon>
    </lineage>
</organism>
<keyword id="KW-1185">Reference proteome</keyword>
<keyword id="KW-0687">Ribonucleoprotein</keyword>
<keyword id="KW-0689">Ribosomal protein</keyword>
<evidence type="ECO:0000255" key="1">
    <source>
        <dbReference type="HAMAP-Rule" id="MF_00374"/>
    </source>
</evidence>
<evidence type="ECO:0000305" key="2"/>